<organism>
    <name type="scientific">Thermus thermophilus (strain ATCC BAA-163 / DSM 7039 / HB27)</name>
    <dbReference type="NCBI Taxonomy" id="262724"/>
    <lineage>
        <taxon>Bacteria</taxon>
        <taxon>Thermotogati</taxon>
        <taxon>Deinococcota</taxon>
        <taxon>Deinococci</taxon>
        <taxon>Thermales</taxon>
        <taxon>Thermaceae</taxon>
        <taxon>Thermus</taxon>
    </lineage>
</organism>
<keyword id="KW-0963">Cytoplasm</keyword>
<keyword id="KW-0255">Endonuclease</keyword>
<keyword id="KW-0378">Hydrolase</keyword>
<keyword id="KW-0460">Magnesium</keyword>
<keyword id="KW-0479">Metal-binding</keyword>
<keyword id="KW-0540">Nuclease</keyword>
<evidence type="ECO:0000255" key="1">
    <source>
        <dbReference type="HAMAP-Rule" id="MF_00042"/>
    </source>
</evidence>
<evidence type="ECO:0000255" key="2">
    <source>
        <dbReference type="PROSITE-ProRule" id="PRU00408"/>
    </source>
</evidence>
<evidence type="ECO:0000256" key="3">
    <source>
        <dbReference type="SAM" id="MobiDB-lite"/>
    </source>
</evidence>
<feature type="chain" id="PRO_0000195409" description="Ribonuclease H">
    <location>
        <begin position="1"/>
        <end position="166"/>
    </location>
</feature>
<feature type="domain" description="RNase H type-1" evidence="2">
    <location>
        <begin position="5"/>
        <end position="147"/>
    </location>
</feature>
<feature type="region of interest" description="Disordered" evidence="3">
    <location>
        <begin position="128"/>
        <end position="166"/>
    </location>
</feature>
<feature type="compositionally biased region" description="Basic and acidic residues" evidence="3">
    <location>
        <begin position="131"/>
        <end position="144"/>
    </location>
</feature>
<feature type="binding site" evidence="1">
    <location>
        <position position="14"/>
    </location>
    <ligand>
        <name>Mg(2+)</name>
        <dbReference type="ChEBI" id="CHEBI:18420"/>
        <label>1</label>
    </ligand>
</feature>
<feature type="binding site" evidence="1">
    <location>
        <position position="14"/>
    </location>
    <ligand>
        <name>Mg(2+)</name>
        <dbReference type="ChEBI" id="CHEBI:18420"/>
        <label>2</label>
    </ligand>
</feature>
<feature type="binding site" evidence="1">
    <location>
        <position position="52"/>
    </location>
    <ligand>
        <name>Mg(2+)</name>
        <dbReference type="ChEBI" id="CHEBI:18420"/>
        <label>1</label>
    </ligand>
</feature>
<feature type="binding site" evidence="1">
    <location>
        <position position="74"/>
    </location>
    <ligand>
        <name>Mg(2+)</name>
        <dbReference type="ChEBI" id="CHEBI:18420"/>
        <label>1</label>
    </ligand>
</feature>
<feature type="binding site" evidence="1">
    <location>
        <position position="139"/>
    </location>
    <ligand>
        <name>Mg(2+)</name>
        <dbReference type="ChEBI" id="CHEBI:18420"/>
        <label>2</label>
    </ligand>
</feature>
<sequence length="166" mass="18677">MNPSPRKRVALFTDGACLGNPGPGGWAALLRFNAHEKLLSGGEACTTNNRMELKAAIEGLKALKEPCEVDLYTDSHYLKKAFTEGWLEGWRKRGWRTAEGKPVKNRDLWEALLLAMAPHRVRFHFVKGHTGHPENERVDREARRQAQSQAKTPCPPQAPTLFHEEA</sequence>
<name>RNH_THET2</name>
<comment type="function">
    <text evidence="1">Endonuclease that specifically degrades the RNA of RNA-DNA hybrids.</text>
</comment>
<comment type="catalytic activity">
    <reaction evidence="1">
        <text>Endonucleolytic cleavage to 5'-phosphomonoester.</text>
        <dbReference type="EC" id="3.1.26.4"/>
    </reaction>
</comment>
<comment type="cofactor">
    <cofactor evidence="1">
        <name>Mg(2+)</name>
        <dbReference type="ChEBI" id="CHEBI:18420"/>
    </cofactor>
    <text evidence="1">Binds 1 Mg(2+) ion per subunit. May bind a second metal ion at a regulatory site, or after substrate binding.</text>
</comment>
<comment type="subunit">
    <text evidence="1">Monomer.</text>
</comment>
<comment type="subcellular location">
    <subcellularLocation>
        <location evidence="1">Cytoplasm</location>
    </subcellularLocation>
</comment>
<comment type="similarity">
    <text evidence="1">Belongs to the RNase H family.</text>
</comment>
<reference key="1">
    <citation type="journal article" date="2004" name="Nat. Biotechnol.">
        <title>The genome sequence of the extreme thermophile Thermus thermophilus.</title>
        <authorList>
            <person name="Henne A."/>
            <person name="Brueggemann H."/>
            <person name="Raasch C."/>
            <person name="Wiezer A."/>
            <person name="Hartsch T."/>
            <person name="Liesegang H."/>
            <person name="Johann A."/>
            <person name="Lienard T."/>
            <person name="Gohl O."/>
            <person name="Martinez-Arias R."/>
            <person name="Jacobi C."/>
            <person name="Starkuviene V."/>
            <person name="Schlenczeck S."/>
            <person name="Dencker S."/>
            <person name="Huber R."/>
            <person name="Klenk H.-P."/>
            <person name="Kramer W."/>
            <person name="Merkl R."/>
            <person name="Gottschalk G."/>
            <person name="Fritz H.-J."/>
        </authorList>
    </citation>
    <scope>NUCLEOTIDE SEQUENCE [LARGE SCALE GENOMIC DNA]</scope>
    <source>
        <strain>ATCC BAA-163 / DSM 7039 / HB27</strain>
    </source>
</reference>
<proteinExistence type="inferred from homology"/>
<gene>
    <name evidence="1" type="primary">rnhA</name>
    <name type="ordered locus">TT_C1191</name>
</gene>
<dbReference type="EC" id="3.1.26.4" evidence="1"/>
<dbReference type="EMBL" id="AE017221">
    <property type="protein sequence ID" value="AAS81533.1"/>
    <property type="molecule type" value="Genomic_DNA"/>
</dbReference>
<dbReference type="RefSeq" id="WP_011173602.1">
    <property type="nucleotide sequence ID" value="NC_005835.1"/>
</dbReference>
<dbReference type="SMR" id="Q72IE1"/>
<dbReference type="KEGG" id="tth:TT_C1191"/>
<dbReference type="eggNOG" id="COG0328">
    <property type="taxonomic scope" value="Bacteria"/>
</dbReference>
<dbReference type="HOGENOM" id="CLU_030894_6_2_0"/>
<dbReference type="OrthoDB" id="7845843at2"/>
<dbReference type="Proteomes" id="UP000000592">
    <property type="component" value="Chromosome"/>
</dbReference>
<dbReference type="GO" id="GO:0005737">
    <property type="term" value="C:cytoplasm"/>
    <property type="evidence" value="ECO:0007669"/>
    <property type="project" value="UniProtKB-SubCell"/>
</dbReference>
<dbReference type="GO" id="GO:0000287">
    <property type="term" value="F:magnesium ion binding"/>
    <property type="evidence" value="ECO:0007669"/>
    <property type="project" value="UniProtKB-UniRule"/>
</dbReference>
<dbReference type="GO" id="GO:0003676">
    <property type="term" value="F:nucleic acid binding"/>
    <property type="evidence" value="ECO:0007669"/>
    <property type="project" value="InterPro"/>
</dbReference>
<dbReference type="GO" id="GO:0004523">
    <property type="term" value="F:RNA-DNA hybrid ribonuclease activity"/>
    <property type="evidence" value="ECO:0007669"/>
    <property type="project" value="UniProtKB-UniRule"/>
</dbReference>
<dbReference type="GO" id="GO:0043137">
    <property type="term" value="P:DNA replication, removal of RNA primer"/>
    <property type="evidence" value="ECO:0007669"/>
    <property type="project" value="TreeGrafter"/>
</dbReference>
<dbReference type="CDD" id="cd09278">
    <property type="entry name" value="RNase_HI_prokaryote_like"/>
    <property type="match status" value="1"/>
</dbReference>
<dbReference type="FunFam" id="3.30.420.10:FF:000089">
    <property type="entry name" value="Ribonuclease H"/>
    <property type="match status" value="1"/>
</dbReference>
<dbReference type="Gene3D" id="3.30.420.10">
    <property type="entry name" value="Ribonuclease H-like superfamily/Ribonuclease H"/>
    <property type="match status" value="1"/>
</dbReference>
<dbReference type="HAMAP" id="MF_00042">
    <property type="entry name" value="RNase_H"/>
    <property type="match status" value="1"/>
</dbReference>
<dbReference type="InterPro" id="IPR050092">
    <property type="entry name" value="RNase_H"/>
</dbReference>
<dbReference type="InterPro" id="IPR012337">
    <property type="entry name" value="RNaseH-like_sf"/>
</dbReference>
<dbReference type="InterPro" id="IPR002156">
    <property type="entry name" value="RNaseH_domain"/>
</dbReference>
<dbReference type="InterPro" id="IPR036397">
    <property type="entry name" value="RNaseH_sf"/>
</dbReference>
<dbReference type="InterPro" id="IPR022892">
    <property type="entry name" value="RNaseHI"/>
</dbReference>
<dbReference type="NCBIfam" id="NF001236">
    <property type="entry name" value="PRK00203.1"/>
    <property type="match status" value="1"/>
</dbReference>
<dbReference type="PANTHER" id="PTHR10642">
    <property type="entry name" value="RIBONUCLEASE H1"/>
    <property type="match status" value="1"/>
</dbReference>
<dbReference type="PANTHER" id="PTHR10642:SF26">
    <property type="entry name" value="RIBONUCLEASE H1"/>
    <property type="match status" value="1"/>
</dbReference>
<dbReference type="Pfam" id="PF00075">
    <property type="entry name" value="RNase_H"/>
    <property type="match status" value="1"/>
</dbReference>
<dbReference type="SUPFAM" id="SSF53098">
    <property type="entry name" value="Ribonuclease H-like"/>
    <property type="match status" value="1"/>
</dbReference>
<dbReference type="PROSITE" id="PS50879">
    <property type="entry name" value="RNASE_H_1"/>
    <property type="match status" value="1"/>
</dbReference>
<accession>Q72IE1</accession>
<protein>
    <recommendedName>
        <fullName evidence="1">Ribonuclease H</fullName>
        <shortName evidence="1">RNase H</shortName>
        <ecNumber evidence="1">3.1.26.4</ecNumber>
    </recommendedName>
</protein>